<dbReference type="EMBL" id="AJ865385">
    <property type="protein sequence ID" value="CAI26302.1"/>
    <property type="molecule type" value="mRNA"/>
</dbReference>
<dbReference type="RefSeq" id="NP_001012408.1">
    <molecule id="Q5GN48-1"/>
    <property type="nucleotide sequence ID" value="NM_001012408.1"/>
</dbReference>
<dbReference type="SMR" id="Q5GN48"/>
<dbReference type="FunCoup" id="Q5GN48">
    <property type="interactions" value="271"/>
</dbReference>
<dbReference type="STRING" id="9823.ENSSSCP00000068371"/>
<dbReference type="GlyGen" id="Q5GN48">
    <property type="glycosylation" value="1 site"/>
</dbReference>
<dbReference type="PaxDb" id="9823-ENSSSCP00000030238"/>
<dbReference type="PeptideAtlas" id="Q5GN48"/>
<dbReference type="GeneID" id="497636"/>
<dbReference type="KEGG" id="ssc:497636"/>
<dbReference type="CTD" id="1756"/>
<dbReference type="eggNOG" id="KOG4286">
    <property type="taxonomic scope" value="Eukaryota"/>
</dbReference>
<dbReference type="InParanoid" id="Q5GN48"/>
<dbReference type="OrthoDB" id="10057795at2759"/>
<dbReference type="Proteomes" id="UP000008227">
    <property type="component" value="Unplaced"/>
</dbReference>
<dbReference type="Proteomes" id="UP000314985">
    <property type="component" value="Unplaced"/>
</dbReference>
<dbReference type="Proteomes" id="UP000694570">
    <property type="component" value="Unplaced"/>
</dbReference>
<dbReference type="Proteomes" id="UP000694571">
    <property type="component" value="Unplaced"/>
</dbReference>
<dbReference type="Proteomes" id="UP000694720">
    <property type="component" value="Unplaced"/>
</dbReference>
<dbReference type="Proteomes" id="UP000694722">
    <property type="component" value="Unplaced"/>
</dbReference>
<dbReference type="Proteomes" id="UP000694723">
    <property type="component" value="Unplaced"/>
</dbReference>
<dbReference type="Proteomes" id="UP000694724">
    <property type="component" value="Unplaced"/>
</dbReference>
<dbReference type="Proteomes" id="UP000694725">
    <property type="component" value="Unplaced"/>
</dbReference>
<dbReference type="Proteomes" id="UP000694726">
    <property type="component" value="Unplaced"/>
</dbReference>
<dbReference type="Proteomes" id="UP000694727">
    <property type="component" value="Unplaced"/>
</dbReference>
<dbReference type="Proteomes" id="UP000694728">
    <property type="component" value="Unplaced"/>
</dbReference>
<dbReference type="GO" id="GO:0005737">
    <property type="term" value="C:cytoplasm"/>
    <property type="evidence" value="ECO:0007669"/>
    <property type="project" value="UniProtKB-KW"/>
</dbReference>
<dbReference type="GO" id="GO:0005856">
    <property type="term" value="C:cytoskeleton"/>
    <property type="evidence" value="ECO:0007669"/>
    <property type="project" value="UniProtKB-SubCell"/>
</dbReference>
<dbReference type="GO" id="GO:0016010">
    <property type="term" value="C:dystrophin-associated glycoprotein complex"/>
    <property type="evidence" value="ECO:0007669"/>
    <property type="project" value="UniProtKB-ARBA"/>
</dbReference>
<dbReference type="GO" id="GO:0120025">
    <property type="term" value="C:plasma membrane bounded cell projection"/>
    <property type="evidence" value="ECO:0007669"/>
    <property type="project" value="UniProtKB-ARBA"/>
</dbReference>
<dbReference type="GO" id="GO:0045211">
    <property type="term" value="C:postsynaptic membrane"/>
    <property type="evidence" value="ECO:0007669"/>
    <property type="project" value="UniProtKB-SubCell"/>
</dbReference>
<dbReference type="GO" id="GO:0042383">
    <property type="term" value="C:sarcolemma"/>
    <property type="evidence" value="ECO:0000318"/>
    <property type="project" value="GO_Central"/>
</dbReference>
<dbReference type="GO" id="GO:0003779">
    <property type="term" value="F:actin binding"/>
    <property type="evidence" value="ECO:0007669"/>
    <property type="project" value="UniProtKB-KW"/>
</dbReference>
<dbReference type="GO" id="GO:0008270">
    <property type="term" value="F:zinc ion binding"/>
    <property type="evidence" value="ECO:0007669"/>
    <property type="project" value="UniProtKB-KW"/>
</dbReference>
<dbReference type="GO" id="GO:0055001">
    <property type="term" value="P:muscle cell development"/>
    <property type="evidence" value="ECO:0000318"/>
    <property type="project" value="GO_Central"/>
</dbReference>
<dbReference type="GO" id="GO:0048666">
    <property type="term" value="P:neuron development"/>
    <property type="evidence" value="ECO:0000318"/>
    <property type="project" value="GO_Central"/>
</dbReference>
<dbReference type="GO" id="GO:0090257">
    <property type="term" value="P:regulation of muscle system process"/>
    <property type="evidence" value="ECO:0000318"/>
    <property type="project" value="GO_Central"/>
</dbReference>
<dbReference type="GO" id="GO:0007519">
    <property type="term" value="P:skeletal muscle tissue development"/>
    <property type="evidence" value="ECO:0000318"/>
    <property type="project" value="GO_Central"/>
</dbReference>
<dbReference type="GO" id="GO:0099536">
    <property type="term" value="P:synaptic signaling"/>
    <property type="evidence" value="ECO:0000318"/>
    <property type="project" value="GO_Central"/>
</dbReference>
<dbReference type="CDD" id="cd21231">
    <property type="entry name" value="CH_DMD_rpt1"/>
    <property type="match status" value="1"/>
</dbReference>
<dbReference type="CDD" id="cd21233">
    <property type="entry name" value="CH_DMD_rpt2"/>
    <property type="match status" value="1"/>
</dbReference>
<dbReference type="CDD" id="cd16246">
    <property type="entry name" value="EFh_DMD"/>
    <property type="match status" value="1"/>
</dbReference>
<dbReference type="CDD" id="cd00176">
    <property type="entry name" value="SPEC"/>
    <property type="match status" value="10"/>
</dbReference>
<dbReference type="CDD" id="cd00201">
    <property type="entry name" value="WW"/>
    <property type="match status" value="1"/>
</dbReference>
<dbReference type="CDD" id="cd02334">
    <property type="entry name" value="ZZ_dystrophin"/>
    <property type="match status" value="1"/>
</dbReference>
<dbReference type="FunFam" id="1.20.58.60:FF:000118">
    <property type="entry name" value="Dystrophin"/>
    <property type="match status" value="1"/>
</dbReference>
<dbReference type="FunFam" id="1.20.58.60:FF:000129">
    <property type="entry name" value="Dystrophin"/>
    <property type="match status" value="1"/>
</dbReference>
<dbReference type="FunFam" id="1.20.58.60:FF:000170">
    <property type="entry name" value="Dystrophin"/>
    <property type="match status" value="1"/>
</dbReference>
<dbReference type="FunFam" id="1.20.58.60:FF:000207">
    <property type="entry name" value="Dystrophin"/>
    <property type="match status" value="1"/>
</dbReference>
<dbReference type="FunFam" id="1.20.58.60:FF:000283">
    <property type="entry name" value="Dystrophin"/>
    <property type="match status" value="1"/>
</dbReference>
<dbReference type="FunFam" id="1.10.238.10:FF:000008">
    <property type="entry name" value="Dystrophin isoform 2"/>
    <property type="match status" value="1"/>
</dbReference>
<dbReference type="FunFam" id="3.30.60.90:FF:000001">
    <property type="entry name" value="Dystrophin isoform 2"/>
    <property type="match status" value="1"/>
</dbReference>
<dbReference type="FunFam" id="1.10.238.10:FF:000023">
    <property type="entry name" value="dystrophin isoform X1"/>
    <property type="match status" value="1"/>
</dbReference>
<dbReference type="FunFam" id="1.20.58.60:FF:000140">
    <property type="entry name" value="dystrophin isoform X1"/>
    <property type="match status" value="1"/>
</dbReference>
<dbReference type="FunFam" id="2.20.70.10:FF:000004">
    <property type="entry name" value="dystrophin isoform X1"/>
    <property type="match status" value="1"/>
</dbReference>
<dbReference type="FunFam" id="1.20.58.60:FF:000091">
    <property type="entry name" value="dystrophin isoform X2"/>
    <property type="match status" value="1"/>
</dbReference>
<dbReference type="FunFam" id="1.20.58.60:FF:000146">
    <property type="entry name" value="dystrophin isoform X2"/>
    <property type="match status" value="1"/>
</dbReference>
<dbReference type="FunFam" id="1.20.58.60:FF:000183">
    <property type="entry name" value="dystrophin isoform X2"/>
    <property type="match status" value="1"/>
</dbReference>
<dbReference type="FunFam" id="1.20.58.60:FF:000239">
    <property type="entry name" value="dystrophin isoform X2"/>
    <property type="match status" value="1"/>
</dbReference>
<dbReference type="FunFam" id="1.20.58.60:FF:000274">
    <property type="entry name" value="dystrophin isoform X2"/>
    <property type="match status" value="1"/>
</dbReference>
<dbReference type="FunFam" id="1.10.418.10:FF:000032">
    <property type="entry name" value="utrophin isoform X1"/>
    <property type="match status" value="1"/>
</dbReference>
<dbReference type="FunFam" id="1.20.58.60:FF:000029">
    <property type="entry name" value="utrophin isoform X1"/>
    <property type="match status" value="1"/>
</dbReference>
<dbReference type="FunFam" id="1.20.58.60:FF:000056">
    <property type="entry name" value="utrophin isoform X1"/>
    <property type="match status" value="1"/>
</dbReference>
<dbReference type="FunFam" id="1.20.58.60:FF:000070">
    <property type="entry name" value="utrophin isoform X1"/>
    <property type="match status" value="1"/>
</dbReference>
<dbReference type="FunFam" id="1.20.58.60:FF:000075">
    <property type="entry name" value="utrophin isoform X1"/>
    <property type="match status" value="1"/>
</dbReference>
<dbReference type="FunFam" id="1.10.418.10:FF:000044">
    <property type="entry name" value="utrophin isoform X2"/>
    <property type="match status" value="1"/>
</dbReference>
<dbReference type="FunFam" id="1.20.58.60:FF:000102">
    <property type="entry name" value="utrophin isoform X2"/>
    <property type="match status" value="1"/>
</dbReference>
<dbReference type="Gene3D" id="1.20.58.60">
    <property type="match status" value="17"/>
</dbReference>
<dbReference type="Gene3D" id="2.20.70.10">
    <property type="match status" value="1"/>
</dbReference>
<dbReference type="Gene3D" id="3.30.60.90">
    <property type="match status" value="1"/>
</dbReference>
<dbReference type="Gene3D" id="1.10.418.10">
    <property type="entry name" value="Calponin-like domain"/>
    <property type="match status" value="2"/>
</dbReference>
<dbReference type="Gene3D" id="1.10.238.10">
    <property type="entry name" value="EF-hand"/>
    <property type="match status" value="2"/>
</dbReference>
<dbReference type="InterPro" id="IPR001589">
    <property type="entry name" value="Actinin_actin-bd_CS"/>
</dbReference>
<dbReference type="InterPro" id="IPR001715">
    <property type="entry name" value="CH_dom"/>
</dbReference>
<dbReference type="InterPro" id="IPR036872">
    <property type="entry name" value="CH_dom_sf"/>
</dbReference>
<dbReference type="InterPro" id="IPR035436">
    <property type="entry name" value="Dystrophin/utrophin"/>
</dbReference>
<dbReference type="InterPro" id="IPR011992">
    <property type="entry name" value="EF-hand-dom_pair"/>
</dbReference>
<dbReference type="InterPro" id="IPR015153">
    <property type="entry name" value="EF-hand_dom_typ1"/>
</dbReference>
<dbReference type="InterPro" id="IPR015154">
    <property type="entry name" value="EF-hand_dom_typ2"/>
</dbReference>
<dbReference type="InterPro" id="IPR050774">
    <property type="entry name" value="KCMF1/Dystrophin"/>
</dbReference>
<dbReference type="InterPro" id="IPR018159">
    <property type="entry name" value="Spectrin/alpha-actinin"/>
</dbReference>
<dbReference type="InterPro" id="IPR002017">
    <property type="entry name" value="Spectrin_repeat"/>
</dbReference>
<dbReference type="InterPro" id="IPR001202">
    <property type="entry name" value="WW_dom"/>
</dbReference>
<dbReference type="InterPro" id="IPR036020">
    <property type="entry name" value="WW_dom_sf"/>
</dbReference>
<dbReference type="InterPro" id="IPR000433">
    <property type="entry name" value="Znf_ZZ"/>
</dbReference>
<dbReference type="InterPro" id="IPR043145">
    <property type="entry name" value="Znf_ZZ_sf"/>
</dbReference>
<dbReference type="PANTHER" id="PTHR12268:SF14">
    <property type="entry name" value="DYSTROPHIN-1"/>
    <property type="match status" value="1"/>
</dbReference>
<dbReference type="PANTHER" id="PTHR12268">
    <property type="entry name" value="E3 UBIQUITIN-PROTEIN LIGASE KCMF1"/>
    <property type="match status" value="1"/>
</dbReference>
<dbReference type="Pfam" id="PF00307">
    <property type="entry name" value="CH"/>
    <property type="match status" value="2"/>
</dbReference>
<dbReference type="Pfam" id="PF09068">
    <property type="entry name" value="EF-hand_2"/>
    <property type="match status" value="1"/>
</dbReference>
<dbReference type="Pfam" id="PF09069">
    <property type="entry name" value="EF-hand_3"/>
    <property type="match status" value="1"/>
</dbReference>
<dbReference type="Pfam" id="PF00435">
    <property type="entry name" value="Spectrin"/>
    <property type="match status" value="17"/>
</dbReference>
<dbReference type="Pfam" id="PF00397">
    <property type="entry name" value="WW"/>
    <property type="match status" value="1"/>
</dbReference>
<dbReference type="Pfam" id="PF00569">
    <property type="entry name" value="ZZ"/>
    <property type="match status" value="1"/>
</dbReference>
<dbReference type="PIRSF" id="PIRSF002341">
    <property type="entry name" value="Dystrophin/utrophin"/>
    <property type="match status" value="1"/>
</dbReference>
<dbReference type="SMART" id="SM00033">
    <property type="entry name" value="CH"/>
    <property type="match status" value="2"/>
</dbReference>
<dbReference type="SMART" id="SM00150">
    <property type="entry name" value="SPEC"/>
    <property type="match status" value="22"/>
</dbReference>
<dbReference type="SMART" id="SM00456">
    <property type="entry name" value="WW"/>
    <property type="match status" value="1"/>
</dbReference>
<dbReference type="SMART" id="SM00291">
    <property type="entry name" value="ZnF_ZZ"/>
    <property type="match status" value="1"/>
</dbReference>
<dbReference type="SUPFAM" id="SSF47576">
    <property type="entry name" value="Calponin-homology domain, CH-domain"/>
    <property type="match status" value="1"/>
</dbReference>
<dbReference type="SUPFAM" id="SSF47473">
    <property type="entry name" value="EF-hand"/>
    <property type="match status" value="2"/>
</dbReference>
<dbReference type="SUPFAM" id="SSF57850">
    <property type="entry name" value="RING/U-box"/>
    <property type="match status" value="1"/>
</dbReference>
<dbReference type="SUPFAM" id="SSF46966">
    <property type="entry name" value="Spectrin repeat"/>
    <property type="match status" value="17"/>
</dbReference>
<dbReference type="SUPFAM" id="SSF51045">
    <property type="entry name" value="WW domain"/>
    <property type="match status" value="1"/>
</dbReference>
<dbReference type="PROSITE" id="PS00019">
    <property type="entry name" value="ACTININ_1"/>
    <property type="match status" value="1"/>
</dbReference>
<dbReference type="PROSITE" id="PS00020">
    <property type="entry name" value="ACTININ_2"/>
    <property type="match status" value="1"/>
</dbReference>
<dbReference type="PROSITE" id="PS50021">
    <property type="entry name" value="CH"/>
    <property type="match status" value="2"/>
</dbReference>
<dbReference type="PROSITE" id="PS01159">
    <property type="entry name" value="WW_DOMAIN_1"/>
    <property type="match status" value="1"/>
</dbReference>
<dbReference type="PROSITE" id="PS50020">
    <property type="entry name" value="WW_DOMAIN_2"/>
    <property type="match status" value="1"/>
</dbReference>
<dbReference type="PROSITE" id="PS01357">
    <property type="entry name" value="ZF_ZZ_1"/>
    <property type="match status" value="1"/>
</dbReference>
<dbReference type="PROSITE" id="PS50135">
    <property type="entry name" value="ZF_ZZ_2"/>
    <property type="match status" value="1"/>
</dbReference>
<gene>
    <name evidence="13" type="primary">DMD</name>
</gene>
<comment type="function">
    <text evidence="3">Anchors the extracellular matrix to the cytoskeleton via F-actin. Ligand for dystroglycan. Component of the dystrophin-associated glycoprotein complex which accumulates at the neuromuscular junction (NMJ) and at a variety of synapses in the peripheral and central nervous systems and has a structural function in stabilizing the sarcolemma. Also implicated in signaling events and synaptic transmission.</text>
</comment>
<comment type="subunit">
    <text evidence="2 3 4">Interacts with SYNM (By similarity). Interacts with the syntrophins SNTG1 and SNTG2. Interacts with KRT19. Component of the dystrophin-associated glycoprotein complex which is composed of three subcomplexes: a cytoplasmic complex comprised of DMD (or UTRN), DTNA and a number of syntrophins, such as SNTB1, SNTB2, SNTG1 and SNTG2, the transmembrane dystroglycan complex, and the sarcoglycan-sarcospan complex. Interacts with DAG1 (betaDAG1) with DMD; the interaction is inhibited by phosphorylation on the PPXY motif of DAG1 (By similarity). Interacts with SYNM; SNTA1 and SNTB1. Interacts with CMYA5. Directly interacts with ANK2 and ANK3; these interactions do not interfere with betaDAG1-binding and are necessary for proper localization in muscle cells. Identified in a dystroglycan complex that contains at least PRX, DRP2, UTRN, DMD and DAG1 (By similarity). Interacts with DTNB (By similarity). Interacts with PGM5; the interaction is direct (By similarity). Interacts with NOS1; localizes NOS1 to sarcolemma in muscle cells (By similarity).</text>
</comment>
<comment type="subcellular location">
    <subcellularLocation>
        <location evidence="3">Cell membrane</location>
        <location evidence="3">Sarcolemma</location>
        <topology evidence="3">Peripheral membrane protein</topology>
        <orientation evidence="3">Cytoplasmic side</orientation>
    </subcellularLocation>
    <subcellularLocation>
        <location evidence="3">Cytoplasm</location>
        <location evidence="3">Cytoskeleton</location>
    </subcellularLocation>
    <subcellularLocation>
        <location evidence="3">Postsynaptic cell membrane</location>
    </subcellularLocation>
    <text evidence="3">In muscle cells, sarcolemma localization requires the presence of ANK2, while localization to costameres requires the presence of ANK3. Localizes to neuromuscular junctions (NMJs). In adult muscle, NMJ localization depends upon ANK2 presence, but not in newborn animals.</text>
</comment>
<comment type="alternative products">
    <event type="alternative splicing"/>
    <isoform>
        <id>Q5GN48-1</id>
        <name evidence="10">1</name>
        <sequence type="displayed"/>
    </isoform>
    <isoform>
        <id>Q5GN48-3</id>
        <name evidence="10">3</name>
        <name evidence="10">Dp71</name>
        <sequence type="described" ref="VSP_051967 VSP_051968 VSP_051969"/>
    </isoform>
    <isoform>
        <id>Q5GN48-4</id>
        <name evidence="10">4</name>
        <name evidence="10">Dp74</name>
        <sequence type="described" ref="VSP_051967 VSP_051968 VSP_051971"/>
    </isoform>
    <isoform>
        <id>Q5GN48-5</id>
        <name evidence="10">5</name>
        <name evidence="10">Dp71-74</name>
        <sequence type="described" ref="VSP_051967 VSP_051968 VSP_051970"/>
    </isoform>
    <isoform>
        <id>Q5GN48-2</id>
        <name evidence="10">2</name>
        <name evidence="10">Dp260</name>
        <sequence type="not described"/>
    </isoform>
</comment>
<comment type="tissue specificity">
    <text evidence="10">In the retina, expressed in the outer plexiform layer (OPL) and around the blood vessels. Also observed at the vitreal border of the retina corresponding to the inner limiting membrane (ILM). Presynaptically localized in cone pedicles and postsynaptically in bipolar cells (at protein level).</text>
</comment>
<evidence type="ECO:0000250" key="1"/>
<evidence type="ECO:0000250" key="2">
    <source>
        <dbReference type="UniProtKB" id="P11530"/>
    </source>
</evidence>
<evidence type="ECO:0000250" key="3">
    <source>
        <dbReference type="UniProtKB" id="P11531"/>
    </source>
</evidence>
<evidence type="ECO:0000250" key="4">
    <source>
        <dbReference type="UniProtKB" id="P11532"/>
    </source>
</evidence>
<evidence type="ECO:0000255" key="5"/>
<evidence type="ECO:0000255" key="6">
    <source>
        <dbReference type="PROSITE-ProRule" id="PRU00044"/>
    </source>
</evidence>
<evidence type="ECO:0000255" key="7">
    <source>
        <dbReference type="PROSITE-ProRule" id="PRU00224"/>
    </source>
</evidence>
<evidence type="ECO:0000255" key="8">
    <source>
        <dbReference type="PROSITE-ProRule" id="PRU00228"/>
    </source>
</evidence>
<evidence type="ECO:0000256" key="9">
    <source>
        <dbReference type="SAM" id="MobiDB-lite"/>
    </source>
</evidence>
<evidence type="ECO:0000269" key="10">
    <source>
    </source>
</evidence>
<evidence type="ECO:0000303" key="11">
    <source>
    </source>
</evidence>
<evidence type="ECO:0000305" key="12"/>
<evidence type="ECO:0000312" key="13">
    <source>
        <dbReference type="EMBL" id="CAI26302.1"/>
    </source>
</evidence>
<reference evidence="12 13" key="1">
    <citation type="journal article" date="2005" name="Neuromuscul. Disord.">
        <title>Molecular cloning and protein expression of Duchenne muscular dystrophy gene products in porcine retina.</title>
        <authorList>
            <person name="Bordais A."/>
            <person name="Bolanos-Jimenez F."/>
            <person name="Fort P."/>
            <person name="Varela C."/>
            <person name="Sahel J.A."/>
            <person name="Picaud S."/>
            <person name="Rendon A."/>
        </authorList>
    </citation>
    <scope>NUCLEOTIDE SEQUENCE [MRNA] (ISOFORM 1)</scope>
    <scope>TISSUE SPECIFICITY</scope>
    <scope>ALTERNATIVE SPLICING</scope>
    <source>
        <tissue evidence="10">Retina</tissue>
    </source>
</reference>
<feature type="chain" id="PRO_0000227522" description="Dystrophin" evidence="12">
    <location>
        <begin position="1"/>
        <end position="3674"/>
    </location>
</feature>
<feature type="domain" description="Calponin-homology (CH) 1" evidence="6">
    <location>
        <begin position="11"/>
        <end position="115"/>
    </location>
</feature>
<feature type="domain" description="Calponin-homology (CH) 2" evidence="6">
    <location>
        <begin position="130"/>
        <end position="236"/>
    </location>
</feature>
<feature type="repeat" description="Spectrin 1" evidence="5">
    <location>
        <begin position="335"/>
        <end position="443"/>
    </location>
</feature>
<feature type="repeat" description="Spectrin 2" evidence="5">
    <location>
        <begin position="444"/>
        <end position="552"/>
    </location>
</feature>
<feature type="repeat" description="Spectrin 3" evidence="5">
    <location>
        <begin position="555"/>
        <end position="663"/>
    </location>
</feature>
<feature type="repeat" description="Spectrin 4" evidence="5">
    <location>
        <begin position="715"/>
        <end position="824"/>
    </location>
</feature>
<feature type="repeat" description="Spectrin 5" evidence="5">
    <location>
        <begin position="826"/>
        <end position="930"/>
    </location>
</feature>
<feature type="repeat" description="Spectrin 6" evidence="5">
    <location>
        <begin position="939"/>
        <end position="1041"/>
    </location>
</feature>
<feature type="repeat" description="Spectrin 7" evidence="5">
    <location>
        <begin position="1044"/>
        <end position="1150"/>
    </location>
</feature>
<feature type="repeat" description="Spectrin 8" evidence="5">
    <location>
        <begin position="1153"/>
        <end position="1259"/>
    </location>
</feature>
<feature type="repeat" description="Spectrin 9" evidence="5">
    <location>
        <begin position="1262"/>
        <end position="1363"/>
    </location>
</feature>
<feature type="repeat" description="Spectrin 10">
    <location>
        <begin position="1364"/>
        <end position="1459"/>
    </location>
</feature>
<feature type="repeat" description="Spectrin 11">
    <location>
        <begin position="1464"/>
        <end position="1564"/>
    </location>
</feature>
<feature type="repeat" description="Spectrin 12">
    <location>
        <begin position="1567"/>
        <end position="1672"/>
    </location>
</feature>
<feature type="repeat" description="Spectrin 13">
    <location>
        <begin position="1675"/>
        <end position="1774"/>
    </location>
</feature>
<feature type="repeat" description="Spectrin 14">
    <location>
        <begin position="1775"/>
        <end position="1870"/>
    </location>
</feature>
<feature type="repeat" description="Spectrin 15">
    <location>
        <begin position="1873"/>
        <end position="1975"/>
    </location>
</feature>
<feature type="repeat" description="Spectrin 16">
    <location>
        <begin position="1988"/>
        <end position="2097"/>
    </location>
</feature>
<feature type="repeat" description="Spectrin 17">
    <location>
        <begin position="2100"/>
        <end position="2204"/>
    </location>
</feature>
<feature type="repeat" description="Spectrin 18">
    <location>
        <begin position="2207"/>
        <end position="2314"/>
    </location>
</feature>
<feature type="repeat" description="Spectrin 19">
    <location>
        <begin position="2315"/>
        <end position="2412"/>
    </location>
</feature>
<feature type="repeat" description="Spectrin 20">
    <location>
        <begin position="2464"/>
        <end position="2566"/>
    </location>
</feature>
<feature type="repeat" description="Spectrin 21">
    <location>
        <begin position="2569"/>
        <end position="2675"/>
    </location>
</feature>
<feature type="repeat" description="Spectrin 22">
    <location>
        <begin position="2678"/>
        <end position="2791"/>
    </location>
</feature>
<feature type="repeat" description="Spectrin 23">
    <location>
        <begin position="2797"/>
        <end position="2919"/>
    </location>
</feature>
<feature type="repeat" description="Spectrin 24">
    <location>
        <begin position="2924"/>
        <end position="3029"/>
    </location>
</feature>
<feature type="domain" description="WW" evidence="7">
    <location>
        <begin position="3044"/>
        <end position="3077"/>
    </location>
</feature>
<feature type="zinc finger region" description="ZZ-type; degenerate" evidence="8">
    <location>
        <begin position="3297"/>
        <end position="3353"/>
    </location>
</feature>
<feature type="region of interest" description="Actin-binding">
    <location>
        <begin position="1"/>
        <end position="236"/>
    </location>
</feature>
<feature type="region of interest" description="ANK2- and ANK-3 binding" evidence="1">
    <location>
        <begin position="59"/>
        <end position="68"/>
    </location>
</feature>
<feature type="region of interest" description="Disordered" evidence="9">
    <location>
        <begin position="306"/>
        <end position="325"/>
    </location>
</feature>
<feature type="region of interest" description="Interaction with SYNM" evidence="1">
    <location>
        <begin position="1411"/>
        <end position="1909"/>
    </location>
</feature>
<feature type="region of interest" description="Interaction with SYNM" evidence="1">
    <location>
        <begin position="3047"/>
        <end position="3397"/>
    </location>
</feature>
<feature type="region of interest" description="Binds to SNTB1" evidence="4">
    <location>
        <begin position="3455"/>
        <end position="3507"/>
    </location>
</feature>
<feature type="region of interest" description="Disordered" evidence="9">
    <location>
        <begin position="3517"/>
        <end position="3543"/>
    </location>
</feature>
<feature type="region of interest" description="Disordered" evidence="9">
    <location>
        <begin position="3590"/>
        <end position="3674"/>
    </location>
</feature>
<feature type="compositionally biased region" description="Polar residues" evidence="9">
    <location>
        <begin position="306"/>
        <end position="318"/>
    </location>
</feature>
<feature type="compositionally biased region" description="Polar residues" evidence="9">
    <location>
        <begin position="3596"/>
        <end position="3615"/>
    </location>
</feature>
<feature type="compositionally biased region" description="Polar residues" evidence="9">
    <location>
        <begin position="3651"/>
        <end position="3662"/>
    </location>
</feature>
<feature type="binding site" evidence="8">
    <location>
        <position position="3302"/>
    </location>
    <ligand>
        <name>Zn(2+)</name>
        <dbReference type="ChEBI" id="CHEBI:29105"/>
    </ligand>
</feature>
<feature type="binding site" evidence="8">
    <location>
        <position position="3305"/>
    </location>
    <ligand>
        <name>Zn(2+)</name>
        <dbReference type="ChEBI" id="CHEBI:29105"/>
    </ligand>
</feature>
<feature type="binding site" evidence="8">
    <location>
        <position position="3326"/>
    </location>
    <ligand>
        <name>Zn(2+)</name>
        <dbReference type="ChEBI" id="CHEBI:29105"/>
    </ligand>
</feature>
<feature type="binding site" evidence="8">
    <location>
        <position position="3329"/>
    </location>
    <ligand>
        <name>Zn(2+)</name>
        <dbReference type="ChEBI" id="CHEBI:29105"/>
    </ligand>
</feature>
<feature type="modified residue" description="Phosphoserine" evidence="4">
    <location>
        <position position="3472"/>
    </location>
</feature>
<feature type="modified residue" description="Phosphoserine" evidence="4">
    <location>
        <position position="3479"/>
    </location>
</feature>
<feature type="modified residue" description="Phosphoserine" evidence="4">
    <location>
        <position position="3489"/>
    </location>
</feature>
<feature type="modified residue" description="Phosphoserine" evidence="4">
    <location>
        <position position="3601"/>
    </location>
</feature>
<feature type="modified residue" description="Phosphoserine" evidence="4">
    <location>
        <position position="3602"/>
    </location>
</feature>
<feature type="modified residue" description="Phosphoserine" evidence="4">
    <location>
        <position position="3606"/>
    </location>
</feature>
<feature type="modified residue" description="Phosphoserine" evidence="4">
    <location>
        <position position="3612"/>
    </location>
</feature>
<feature type="modified residue" description="Phosphoserine" evidence="4">
    <location>
        <position position="3613"/>
    </location>
</feature>
<feature type="modified residue" description="Phosphoserine" evidence="4">
    <location>
        <position position="3655"/>
    </location>
</feature>
<feature type="splice variant" id="VSP_051967" description="In isoform 3, isoform 4 and isoform 5." evidence="11">
    <original>M</original>
    <variation>MREQLKG</variation>
    <location>
        <position position="1"/>
    </location>
</feature>
<feature type="splice variant" id="VSP_051968" description="In isoform 3, isoform 4 and isoform 5." evidence="11">
    <location>
        <begin position="2"/>
        <end position="3064"/>
    </location>
</feature>
<feature type="splice variant" id="VSP_051969" description="In isoform 3." evidence="11">
    <location>
        <begin position="3397"/>
        <end position="3410"/>
    </location>
</feature>
<feature type="splice variant" id="VSP_051970" description="In isoform 5." evidence="11">
    <location>
        <begin position="3398"/>
        <end position="3507"/>
    </location>
</feature>
<feature type="splice variant" id="VSP_051971" description="In isoform 4." evidence="11">
    <original>IDDEHLLIQHYCQSLNQDSPLSQPRSPAQILISLESEERGELERILADLEEENR</original>
    <variation>M</variation>
    <location>
        <begin position="3454"/>
        <end position="3507"/>
    </location>
</feature>
<accession>Q5GN48</accession>
<protein>
    <recommendedName>
        <fullName>Dystrophin</fullName>
    </recommendedName>
</protein>
<keyword id="KW-0009">Actin-binding</keyword>
<keyword id="KW-0025">Alternative splicing</keyword>
<keyword id="KW-0106">Calcium</keyword>
<keyword id="KW-1003">Cell membrane</keyword>
<keyword id="KW-0963">Cytoplasm</keyword>
<keyword id="KW-0206">Cytoskeleton</keyword>
<keyword id="KW-0472">Membrane</keyword>
<keyword id="KW-0479">Metal-binding</keyword>
<keyword id="KW-0597">Phosphoprotein</keyword>
<keyword id="KW-0628">Postsynaptic cell membrane</keyword>
<keyword id="KW-1185">Reference proteome</keyword>
<keyword id="KW-0677">Repeat</keyword>
<keyword id="KW-0770">Synapse</keyword>
<keyword id="KW-0862">Zinc</keyword>
<keyword id="KW-0863">Zinc-finger</keyword>
<proteinExistence type="evidence at protein level"/>
<sequence>MSEVSSDEREDVQKKTFTKWINAQFSKFGKQHIENLFNDLQDGRRLLDLLEGLTGQKLPKEKGSTRVHALNNVNKALQVLQKNNVDLVNIGSTDIVDGNHKLTLGLIWNIILHWQVKNVMKNIMAGLQQTNSEKILLSWVRQSTRNYPQVNVINFTTSWSDGLALNALIHSHRPDLFDWNSVVCQQSATQRLEHAFNIAKYQLGIEKLLDPEDVATTYPDKKSILMYVTSLFQVLPQQVSIEAIQEVEMLPRPSKVTREEHFQLHHQMHYSQQITVCLAQGYERTPSPKPRFKSYAYTQAAYVTTSDPTRSPFPSQRLESPEDKSFGSSLLETEVNLDSYQTALEEVLSWLLSAEDTLQAQGEISNDVEEVKEQFHTHEGYMMDLTSHQGRIGSVLQLGSQLIGKGKLSEDEETEVQEQMNLLNSRWECLRVASVEKQSNLHKVLMDLQNQQLKELNDWLTKTEEKTRKMEKEPLGPDLEDLKHQIQQHKVLQEDLEQEQVRVNSLTHMVVVVDESSGDHATAALEEQLKVLGDRWANICRWTEDRWVLLQDILLKWQRFTEEQCLFSTWLSEKEDALNKIHTTGFKDQGEMLSSLQKLAVLKTDLEKKKQTMDKLSSLNQDLLSTLKNTLVAQKMEAWLDNFAQRWDNLVQKLEKSSTQISQAVTTTQPSLTQTTVMETVTMVTTREQILVKHAQEELPPPPPQKKRQIIVDSEIRKRLDVDITELHSWITRSEAVLQSPEFAIYRKEGNFSDLKEKVNAIEREKAEKFRKLQDASRSAQALVEQMVNEGVNADSIKQAAEQLNSRWIEFCQLLSERLNWLEYQNRIITFYNQLQQLEQITTAAENWLKTQPITTSEPTAVKSQLKICKDEVNRLSALQPQIERLKIESIALKEKGQGPMFLDADSVAFTNHFNQVFADMQAKEKELQIIFDTLPPMRYQETMSTILTWIQHSEAKLSIPQATVTEYEIMEQRLGELQALQSSLQEQQNGLNYLSTTVKEMSKKAPSNISRKYQSEFEEIEGRWKKLSAQLMEHCQKLEEQIAKLRKLQNHIKTLKNWMAEVDIFLKEEWPALGDSEILRKQLKQCRLLVSDIQTIQPSLNSVNEGGQKIKKEAEPEFASRLETELRELNTQWDYICRQVYARKEALKGGLDKTISLQKDLSEMHEWMTQAEEEYLERDFEYKTPDELQTAVEEMKRAKEEAQQKEAKVKLLTESVNSVIAQAPPAAQEALKKELDTLTTNYQWLCTRLNGKCKTLEEVWACWHELLSYLEKANKWLSEVEFKLKTTENIPGGAEEISEVLESLENLMQHSEDNPNQIRILAQTLTDGGVMDELINEELETFNSRWRELHEEAVRRQKLLEQSIQSAQEIEKSLHLIQDSLSSIDHQLAVYIADKVDAAQMPQEAQKIQSDLTSHEISLEEMKKHYQGKEAAPRVLSQIELAQKKLQDVSMKFRLFQKPANFEQRLQESKMILDEVKMHLPALEIKSVEQEVVQSQLNHCVNLYKSLSEVKSEVEMVIKTGRQIVQKKQTENPKELDERVTALKLHYNELGAKVTERKQQLEKCLKLSRKMRKEMNVLTEWLAATDTELTKRSAVEGMPSNLDSEVVWGKATQKEIEKQKFHLKSISEIGEALKMVLGKKETLVEDKLSLLNSNWIAVTSRAEEWLNLLLEYQKHMENFDQNVDHITKWIIQADTLLDESEKKKPQQKEDVLKRLKAEMNDMRPKVDSTRDQAANLMANRGDHCRKVIEPKISELNHRFAAISHRIKTGKASIPLKELEQFNSDIQKLLEPLEAEIQQGVNLKEEDFNKDMSEDNEGTVKELLQRGDNLQQRITDERKREEIKIKQQLLQTKHNALKDLRSQRRKKALEISHQWYQYKRQADDLLKCLDDIEKKLASLPEPQDEKKIKEIDRELQKKKEELDAVRRQAEGLSEDGAAMAVEPTQIQLSKRWREIESKFAHFRRLNFAQIHTVHEESVMVMTEDMPLEISYVPSAYLTEITHVSQALSEVEQLLNAPDLCAKDFEDLFKQEESLKNIKDSLQQISGRVDIIHNKKTAGLQSATPVERTRLQEALSQLDFQWERVNKMYKDRQGKFDRSVEKWRRFHYDMKIFNQWLTEAEHFLKKTQIPENWEHAKYKWYLKELQDGIGQRQTIVRVLNATGEEVIQQSSKTDASILQEKLGSLNLRWQEVCKQLAERKKRLEEQKNILSEFQRDLNEFVLWLEEADNITSVALEPGNEQQLKEKLEEIKLLAEELPLRQGTLKQLNETGGTVLVSAPISPEEQDKIENKLKQTNLQWIKVSRILPEKQGEIEAHIKDLGQFEEQLNHLLVWLSPIKNQLEIYNQPNQTGPFDIKETEVAVQAKQLDVEGILSKGQHLYKEKPATQPVKRKLEDLSSEWKAVTHLLQELRAKWPGPTPGLTTIEAPTSQTVTLVTQPTVTKETAISKPEMPSSLLLEVPALADFNRAWTELTDWLSLLDRVIKSQRVMVGDLEDINEMIIKQKATLQDLEQRRPQLEELITAAQNLKNKTSNQEARTIITDRIERIQSQWDEVQEHLQNRRQQLNEMLKDSTQWLEAKEEAEQVLGQARAKLESWKEGPYTMDAIQRKITETKQLAKDLRQWQINVDVANDLALKLLRDYSADDTRKVHMITENINASWANIHKRLSERETVLEETHRLLQQFPLDLEKFLAWLTEAETTANVLQDATHKERLLEDSKGVRELMKQWQDLQGEIEAHTDIYHNLDENGQKILRSLEGSDDAILLQRRLDNMNFKWSELRKKSLNIRSHLEASSDQWKRLHLSLQELLVWLQLKDDELSRQAPIGGDCPAVQKQNDVHRAFKRELKTKEPVIMSTLETVRIFLTEQPLEGLEKLYQEPRELPPEERAQNVTRLLRKQAEEVNTEWEKLNLHSADWQRKIDEALERLQELQEATDELDLKLRQAEVIKGSWQPVGDLLIDSLQDHLEKVKALRGEKAPLKENVSHVNDLARQLTTLGIQLSPYNLSTLEDLNTRWKLLQVAVEDRIRQLHEAHRDFGPASQHFLSTSVQGPWERAISPNKVPYYINHETQTTCWDHPKMTELYQSLADLNNVRFSAYRTAMKLRRLQKALCLDLLSLSAACDALDQHNLKQNDQPMDILQIINCLTTVYDRLEQEHNNLVNVPLCVDMCLNWLLNVYDTGRTGRIRVLSFKTGIVSLCKAHLEDKYRYLFKQVASSTGFCDQRRLGLLLHDSIQIPRQLGEVASFGGSNIEPSVRSCFQFANNKPEIEAALFLDWMRLEPQSMVWLPVLHRVAAAETAKHQAKCNICKECPIIGFRYRSLKHFNYDICQSCFFSGRVAKGHKMHYPMVEYCTPTTSGEDVRDFAKVLKNKFRTKRYFAKHPRMGYLPVQTVLEGDNMETPVTLINFWPVDSAPASSPQLSHDDTHSRIEHYASRLAEMENSNGSYLNDSISPNESIDDEHLLIQHYCQSLNQDSPLSQPRSPAQILISLESEERGELERILADLEEENRNLQAEYDRLKQQHEHKGLSPLPSPPEMMPTSPQSPRDAELIAEAKLLRQHKGRLEARMQTLEDHNKQLESQLHRLRQLLEQPQAEAKVNGTTVSSPSTSLQRSDSSQPMLLRVVGSQTSESMGEEDLLSPPQDTSTGLEEVMEQLNNSFPSSRGRNTPGKPVREDTM</sequence>
<name>DMD_PIG</name>
<organism>
    <name type="scientific">Sus scrofa</name>
    <name type="common">Pig</name>
    <dbReference type="NCBI Taxonomy" id="9823"/>
    <lineage>
        <taxon>Eukaryota</taxon>
        <taxon>Metazoa</taxon>
        <taxon>Chordata</taxon>
        <taxon>Craniata</taxon>
        <taxon>Vertebrata</taxon>
        <taxon>Euteleostomi</taxon>
        <taxon>Mammalia</taxon>
        <taxon>Eutheria</taxon>
        <taxon>Laurasiatheria</taxon>
        <taxon>Artiodactyla</taxon>
        <taxon>Suina</taxon>
        <taxon>Suidae</taxon>
        <taxon>Sus</taxon>
    </lineage>
</organism>